<gene>
    <name evidence="2" type="primary">FDX2</name>
    <name type="synonym">FDX1L</name>
</gene>
<keyword id="KW-0001">2Fe-2S</keyword>
<keyword id="KW-0249">Electron transport</keyword>
<keyword id="KW-0408">Iron</keyword>
<keyword id="KW-0411">Iron-sulfur</keyword>
<keyword id="KW-0479">Metal-binding</keyword>
<keyword id="KW-0496">Mitochondrion</keyword>
<keyword id="KW-1185">Reference proteome</keyword>
<keyword id="KW-0809">Transit peptide</keyword>
<keyword id="KW-0813">Transport</keyword>
<name>FDX2_BOVIN</name>
<reference key="1">
    <citation type="submission" date="2006-08" db="EMBL/GenBank/DDBJ databases">
        <authorList>
            <consortium name="NIH - Mammalian Gene Collection (MGC) project"/>
        </authorList>
    </citation>
    <scope>NUCLEOTIDE SEQUENCE [LARGE SCALE MRNA]</scope>
    <source>
        <strain>Hereford</strain>
        <tissue>Hypothalamus</tissue>
    </source>
</reference>
<accession>Q05B51</accession>
<feature type="transit peptide" description="Mitochondrion" evidence="4">
    <location>
        <begin position="1"/>
        <end position="52"/>
    </location>
</feature>
<feature type="chain" id="PRO_0000325951" description="Ferredoxin-2, mitochondrial">
    <location>
        <begin position="53"/>
        <end position="183"/>
    </location>
</feature>
<feature type="domain" description="2Fe-2S ferredoxin-type" evidence="5">
    <location>
        <begin position="68"/>
        <end position="170"/>
    </location>
</feature>
<feature type="binding site" evidence="5">
    <location>
        <position position="105"/>
    </location>
    <ligand>
        <name>[2Fe-2S] cluster</name>
        <dbReference type="ChEBI" id="CHEBI:190135"/>
    </ligand>
</feature>
<feature type="binding site" evidence="5">
    <location>
        <position position="111"/>
    </location>
    <ligand>
        <name>[2Fe-2S] cluster</name>
        <dbReference type="ChEBI" id="CHEBI:190135"/>
    </ligand>
</feature>
<feature type="binding site" evidence="5">
    <location>
        <position position="114"/>
    </location>
    <ligand>
        <name>[2Fe-2S] cluster</name>
        <dbReference type="ChEBI" id="CHEBI:190135"/>
    </ligand>
</feature>
<feature type="binding site" evidence="5">
    <location>
        <position position="151"/>
    </location>
    <ligand>
        <name>[2Fe-2S] cluster</name>
        <dbReference type="ChEBI" id="CHEBI:190135"/>
    </ligand>
</feature>
<evidence type="ECO:0000250" key="1">
    <source>
        <dbReference type="UniProtKB" id="P10109"/>
    </source>
</evidence>
<evidence type="ECO:0000250" key="2">
    <source>
        <dbReference type="UniProtKB" id="Q6P4F2"/>
    </source>
</evidence>
<evidence type="ECO:0000250" key="3">
    <source>
        <dbReference type="UniProtKB" id="Q9H1K1"/>
    </source>
</evidence>
<evidence type="ECO:0000255" key="4"/>
<evidence type="ECO:0000255" key="5">
    <source>
        <dbReference type="PROSITE-ProRule" id="PRU00465"/>
    </source>
</evidence>
<evidence type="ECO:0000305" key="6"/>
<proteinExistence type="evidence at transcript level"/>
<sequence>MAASVAWGGVNAGFLLRAARGAWWSRPGGFWGSGEAAAPAIARKFRATGSRPAGEEEAGGPERPGDVVNVVFVDRSGQRIPVSGRVGDNVLHLAQRHGLDLEGACEASLACSTCHVYVSEDHLDLLPPPDEREDDMLDMAPLLQENSRLGCQIVLTPELEGAEFTLPKITRNFYVDGHVPKPH</sequence>
<comment type="function">
    <text evidence="2 3">Electron donor, of the core iron-sulfur cluster (ISC) assembly complex, that acts to reduce the persulfide into sulfide during [2Fe-2S] clusters assembly on the scaffolding protein ISCU (By similarity). The core iron-sulfur cluster (ISC) assembly complex is involved in the de novo synthesis of a [2Fe-2S] cluster, the first step of the mitochondrial iron-sulfur protein biogenesis. This process is initiated by the cysteine desulfurase complex (NFS1:LYRM4:NDUFAB1) that produces persulfide which is delivered on the scaffold protein ISCU in a FXN-dependent manner. Then this complex is stabilized by FDX2 which provides reducing equivalents to accomplish the [2Fe-2S] cluster assembly. Finally, the [2Fe-2S] cluster is transferred from ISCU to chaperone proteins, including HSCB, HSPA9 and GLRX5 (By similarity). Essential for coenzyme Q biosynthesis: together with FDXR, transfers the electrons required for the hydroxylation reaction performed by COQ6 (By similarity).</text>
</comment>
<comment type="cofactor">
    <cofactor evidence="3">
        <name>[2Fe-2S] cluster</name>
        <dbReference type="ChEBI" id="CHEBI:190135"/>
    </cofactor>
    <text evidence="3">Binds 1 [2Fe-2S] cluster.</text>
</comment>
<comment type="subunit">
    <text evidence="2">Component of the mitochondrial core iron-sulfur cluster (ISC) complex composed of NFS1, LYRM4, NDUFAB1, ISCU, FXN, and FDX2; this complex is a heterohexamer containing two copies of each monomer. Form a heterodimer complex with NFS1. Interacts (in both their reduced and oxidized states) with the cysteine desulfurase (NFS1:LYRM4) complex; this interaction stimulates cysteine desulfurase activity, and serves as a reductant for Fe-S cluster assembly.</text>
</comment>
<comment type="subcellular location">
    <subcellularLocation>
        <location evidence="3">Mitochondrion</location>
    </subcellularLocation>
    <subcellularLocation>
        <location evidence="1">Mitochondrion matrix</location>
    </subcellularLocation>
</comment>
<comment type="similarity">
    <text evidence="6">Belongs to the adrenodoxin/putidaredoxin family.</text>
</comment>
<comment type="sequence caution" evidence="6">
    <conflict type="erroneous initiation">
        <sequence resource="EMBL-CDS" id="AAI22826"/>
    </conflict>
    <text>Extended N-terminus.</text>
</comment>
<protein>
    <recommendedName>
        <fullName evidence="2">Ferredoxin-2, mitochondrial</fullName>
    </recommendedName>
    <alternativeName>
        <fullName>Adrenodoxin-like protein</fullName>
    </alternativeName>
    <alternativeName>
        <fullName>Ferredoxin-1-like protein</fullName>
    </alternativeName>
</protein>
<organism>
    <name type="scientific">Bos taurus</name>
    <name type="common">Bovine</name>
    <dbReference type="NCBI Taxonomy" id="9913"/>
    <lineage>
        <taxon>Eukaryota</taxon>
        <taxon>Metazoa</taxon>
        <taxon>Chordata</taxon>
        <taxon>Craniata</taxon>
        <taxon>Vertebrata</taxon>
        <taxon>Euteleostomi</taxon>
        <taxon>Mammalia</taxon>
        <taxon>Eutheria</taxon>
        <taxon>Laurasiatheria</taxon>
        <taxon>Artiodactyla</taxon>
        <taxon>Ruminantia</taxon>
        <taxon>Pecora</taxon>
        <taxon>Bovidae</taxon>
        <taxon>Bovinae</taxon>
        <taxon>Bos</taxon>
    </lineage>
</organism>
<dbReference type="EMBL" id="BC122825">
    <property type="protein sequence ID" value="AAI22826.1"/>
    <property type="status" value="ALT_INIT"/>
    <property type="molecule type" value="mRNA"/>
</dbReference>
<dbReference type="RefSeq" id="NP_001073695.1">
    <property type="nucleotide sequence ID" value="NM_001080226.2"/>
</dbReference>
<dbReference type="SMR" id="Q05B51"/>
<dbReference type="FunCoup" id="Q05B51">
    <property type="interactions" value="1593"/>
</dbReference>
<dbReference type="STRING" id="9913.ENSBTAP00000013630"/>
<dbReference type="PaxDb" id="9913-ENSBTAP00000013630"/>
<dbReference type="GeneID" id="505159"/>
<dbReference type="KEGG" id="bta:505159"/>
<dbReference type="CTD" id="112812"/>
<dbReference type="VEuPathDB" id="HostDB:ENSBTAG00000010318"/>
<dbReference type="eggNOG" id="KOG3309">
    <property type="taxonomic scope" value="Eukaryota"/>
</dbReference>
<dbReference type="HOGENOM" id="CLU_082632_0_2_1"/>
<dbReference type="InParanoid" id="Q05B51"/>
<dbReference type="OrthoDB" id="268593at2759"/>
<dbReference type="TreeFam" id="TF354319"/>
<dbReference type="Reactome" id="R-BTA-1362409">
    <property type="pathway name" value="Mitochondrial iron-sulfur cluster biogenesis"/>
</dbReference>
<dbReference type="Reactome" id="R-BTA-196108">
    <property type="pathway name" value="Pregnenolone biosynthesis"/>
</dbReference>
<dbReference type="Reactome" id="R-BTA-211976">
    <property type="pathway name" value="Endogenous sterols"/>
</dbReference>
<dbReference type="Reactome" id="R-BTA-2395516">
    <property type="pathway name" value="Electron transport from NADPH to Ferredoxin"/>
</dbReference>
<dbReference type="Proteomes" id="UP000009136">
    <property type="component" value="Chromosome 7"/>
</dbReference>
<dbReference type="Bgee" id="ENSBTAG00000010318">
    <property type="expression patterns" value="Expressed in oocyte and 106 other cell types or tissues"/>
</dbReference>
<dbReference type="GO" id="GO:0005759">
    <property type="term" value="C:mitochondrial matrix"/>
    <property type="evidence" value="ECO:0007669"/>
    <property type="project" value="UniProtKB-SubCell"/>
</dbReference>
<dbReference type="GO" id="GO:0005739">
    <property type="term" value="C:mitochondrion"/>
    <property type="evidence" value="ECO:0000318"/>
    <property type="project" value="GO_Central"/>
</dbReference>
<dbReference type="GO" id="GO:0051537">
    <property type="term" value="F:2 iron, 2 sulfur cluster binding"/>
    <property type="evidence" value="ECO:0007669"/>
    <property type="project" value="UniProtKB-KW"/>
</dbReference>
<dbReference type="GO" id="GO:0009055">
    <property type="term" value="F:electron transfer activity"/>
    <property type="evidence" value="ECO:0000250"/>
    <property type="project" value="UniProtKB"/>
</dbReference>
<dbReference type="GO" id="GO:0046872">
    <property type="term" value="F:metal ion binding"/>
    <property type="evidence" value="ECO:0007669"/>
    <property type="project" value="UniProtKB-KW"/>
</dbReference>
<dbReference type="GO" id="GO:0044571">
    <property type="term" value="P:[2Fe-2S] cluster assembly"/>
    <property type="evidence" value="ECO:0000250"/>
    <property type="project" value="UniProtKB"/>
</dbReference>
<dbReference type="GO" id="GO:0044572">
    <property type="term" value="P:[4Fe-4S] cluster assembly"/>
    <property type="evidence" value="ECO:0000250"/>
    <property type="project" value="UniProtKB"/>
</dbReference>
<dbReference type="GO" id="GO:0022900">
    <property type="term" value="P:electron transport chain"/>
    <property type="evidence" value="ECO:0000318"/>
    <property type="project" value="GO_Central"/>
</dbReference>
<dbReference type="GO" id="GO:0140647">
    <property type="term" value="P:P450-containing electron transport chain"/>
    <property type="evidence" value="ECO:0007669"/>
    <property type="project" value="InterPro"/>
</dbReference>
<dbReference type="GO" id="GO:0006744">
    <property type="term" value="P:ubiquinone biosynthetic process"/>
    <property type="evidence" value="ECO:0000250"/>
    <property type="project" value="UniProtKB"/>
</dbReference>
<dbReference type="CDD" id="cd00207">
    <property type="entry name" value="fer2"/>
    <property type="match status" value="1"/>
</dbReference>
<dbReference type="FunFam" id="3.10.20.30:FF:000013">
    <property type="entry name" value="Adrenodoxin, mitochondrial"/>
    <property type="match status" value="1"/>
</dbReference>
<dbReference type="Gene3D" id="3.10.20.30">
    <property type="match status" value="1"/>
</dbReference>
<dbReference type="InterPro" id="IPR036010">
    <property type="entry name" value="2Fe-2S_ferredoxin-like_sf"/>
</dbReference>
<dbReference type="InterPro" id="IPR001041">
    <property type="entry name" value="2Fe-2S_ferredoxin-type"/>
</dbReference>
<dbReference type="InterPro" id="IPR001055">
    <property type="entry name" value="Adrenodoxin-like"/>
</dbReference>
<dbReference type="InterPro" id="IPR018298">
    <property type="entry name" value="Adrenodoxin_Fe-S_BS"/>
</dbReference>
<dbReference type="InterPro" id="IPR012675">
    <property type="entry name" value="Beta-grasp_dom_sf"/>
</dbReference>
<dbReference type="PANTHER" id="PTHR23426:SF65">
    <property type="entry name" value="FERREDOXIN-2, MITOCHONDRIAL"/>
    <property type="match status" value="1"/>
</dbReference>
<dbReference type="PANTHER" id="PTHR23426">
    <property type="entry name" value="FERREDOXIN/ADRENODOXIN"/>
    <property type="match status" value="1"/>
</dbReference>
<dbReference type="Pfam" id="PF00111">
    <property type="entry name" value="Fer2"/>
    <property type="match status" value="1"/>
</dbReference>
<dbReference type="PRINTS" id="PR00355">
    <property type="entry name" value="ADRENODOXIN"/>
</dbReference>
<dbReference type="SUPFAM" id="SSF54292">
    <property type="entry name" value="2Fe-2S ferredoxin-like"/>
    <property type="match status" value="1"/>
</dbReference>
<dbReference type="PROSITE" id="PS51085">
    <property type="entry name" value="2FE2S_FER_2"/>
    <property type="match status" value="1"/>
</dbReference>
<dbReference type="PROSITE" id="PS00814">
    <property type="entry name" value="ADX"/>
    <property type="match status" value="1"/>
</dbReference>